<reference key="1">
    <citation type="journal article" date="2018" name="Front. Plant Sci.">
        <title>In planta functional analysis and subcellular localization of the oomycete pathogen Plasmopara viticola candidate RXLR effector repertoire.</title>
        <authorList>
            <person name="Liu Y."/>
            <person name="Lan X."/>
            <person name="Song S."/>
            <person name="Yin L."/>
            <person name="Dry I.B."/>
            <person name="Qu J."/>
            <person name="Xiang J."/>
            <person name="Lu J."/>
        </authorList>
    </citation>
    <scope>NUCLEOTIDE SEQUENCE [MRNA]</scope>
    <scope>DOMAIN</scope>
    <scope>FUNCTION</scope>
    <scope>SUBCELLULAR LOCATION</scope>
</reference>
<dbReference type="GO" id="GO:0005576">
    <property type="term" value="C:extracellular region"/>
    <property type="evidence" value="ECO:0007669"/>
    <property type="project" value="UniProtKB-SubCell"/>
</dbReference>
<dbReference type="GO" id="GO:0042025">
    <property type="term" value="C:host cell nucleus"/>
    <property type="evidence" value="ECO:0007669"/>
    <property type="project" value="UniProtKB-SubCell"/>
</dbReference>
<evidence type="ECO:0000255" key="1"/>
<evidence type="ECO:0000269" key="2">
    <source>
    </source>
</evidence>
<evidence type="ECO:0000303" key="3">
    <source>
    </source>
</evidence>
<evidence type="ECO:0000305" key="4"/>
<evidence type="ECO:0000305" key="5">
    <source>
    </source>
</evidence>
<accession>P0CV28</accession>
<name>RLR82_PLAVT</name>
<gene>
    <name evidence="3" type="primary">RXLR82</name>
</gene>
<comment type="function">
    <text evidence="2">Secreted effector that acts as an elicitor that induces cell death in host plant cells.</text>
</comment>
<comment type="subcellular location">
    <subcellularLocation>
        <location evidence="2">Secreted</location>
    </subcellularLocation>
    <subcellularLocation>
        <location evidence="2">Host nucleus</location>
    </subcellularLocation>
</comment>
<comment type="domain">
    <text evidence="5">Has the canonical translocation RxLR motif, but lacks the canonical EER motif, which characterizes most oomycete effectors identified so far.</text>
</comment>
<comment type="similarity">
    <text evidence="4">Belongs to the RxLR effector family.</text>
</comment>
<sequence length="111" mass="13239">MFHLYLLLVFETRYTCLMKCSISTCSYRWLRRREWFCLIYSGCCRKILVIEGLQRSDVAFLFTRRTIMHYVPFRGLFCASCVGYFSIRCCSRCEHFCTKTPTKSFGTEAWS</sequence>
<proteinExistence type="inferred from homology"/>
<keyword id="KW-1048">Host nucleus</keyword>
<keyword id="KW-0964">Secreted</keyword>
<keyword id="KW-0732">Signal</keyword>
<keyword id="KW-0843">Virulence</keyword>
<protein>
    <recommendedName>
        <fullName evidence="3">Secreted RxLR effector protein 82</fullName>
    </recommendedName>
</protein>
<feature type="signal peptide" evidence="1">
    <location>
        <begin position="1"/>
        <end position="17"/>
    </location>
</feature>
<feature type="chain" id="PRO_0000447937" description="Secreted RxLR effector protein 82">
    <location>
        <begin position="18"/>
        <end position="111"/>
    </location>
</feature>
<feature type="short sequence motif" description="RxLR" evidence="5">
    <location>
        <begin position="28"/>
        <end position="31"/>
    </location>
</feature>
<organism>
    <name type="scientific">Plasmopara viticola</name>
    <name type="common">Downy mildew of grapevine</name>
    <name type="synonym">Botrytis viticola</name>
    <dbReference type="NCBI Taxonomy" id="143451"/>
    <lineage>
        <taxon>Eukaryota</taxon>
        <taxon>Sar</taxon>
        <taxon>Stramenopiles</taxon>
        <taxon>Oomycota</taxon>
        <taxon>Peronosporales</taxon>
        <taxon>Peronosporaceae</taxon>
        <taxon>Plasmopara</taxon>
    </lineage>
</organism>